<protein>
    <recommendedName>
        <fullName evidence="1">Bifunctional uridylyltransferase/uridylyl-removing enzyme</fullName>
        <shortName evidence="1">UTase/UR</shortName>
    </recommendedName>
    <alternativeName>
        <fullName evidence="1">Bifunctional [protein-PII] modification enzyme</fullName>
    </alternativeName>
    <alternativeName>
        <fullName evidence="1">Bifunctional nitrogen sensor protein</fullName>
    </alternativeName>
    <domain>
        <recommendedName>
            <fullName evidence="1">[Protein-PII] uridylyltransferase</fullName>
            <shortName evidence="1">PII uridylyltransferase</shortName>
            <shortName evidence="1">UTase</shortName>
            <ecNumber evidence="1">2.7.7.59</ecNumber>
        </recommendedName>
    </domain>
    <domain>
        <recommendedName>
            <fullName evidence="1">[Protein-PII]-UMP uridylyl-removing enzyme</fullName>
            <shortName evidence="1">UR</shortName>
            <ecNumber evidence="1">3.1.4.-</ecNumber>
        </recommendedName>
    </domain>
</protein>
<dbReference type="EC" id="2.7.7.59" evidence="1"/>
<dbReference type="EC" id="3.1.4.-" evidence="1"/>
<dbReference type="EMBL" id="AE014075">
    <property type="protein sequence ID" value="AAN78696.1"/>
    <property type="molecule type" value="Genomic_DNA"/>
</dbReference>
<dbReference type="RefSeq" id="WP_001094532.1">
    <property type="nucleotide sequence ID" value="NZ_CP051263.1"/>
</dbReference>
<dbReference type="SMR" id="Q8CY19"/>
<dbReference type="STRING" id="199310.c0202"/>
<dbReference type="KEGG" id="ecc:c0202"/>
<dbReference type="eggNOG" id="COG2844">
    <property type="taxonomic scope" value="Bacteria"/>
</dbReference>
<dbReference type="HOGENOM" id="CLU_012833_0_0_6"/>
<dbReference type="BioCyc" id="ECOL199310:C0202-MONOMER"/>
<dbReference type="Proteomes" id="UP000001410">
    <property type="component" value="Chromosome"/>
</dbReference>
<dbReference type="GO" id="GO:0008773">
    <property type="term" value="F:[protein-PII] uridylyltransferase activity"/>
    <property type="evidence" value="ECO:0007669"/>
    <property type="project" value="UniProtKB-UniRule"/>
</dbReference>
<dbReference type="GO" id="GO:0008081">
    <property type="term" value="F:phosphoric diester hydrolase activity"/>
    <property type="evidence" value="ECO:0007669"/>
    <property type="project" value="UniProtKB-UniRule"/>
</dbReference>
<dbReference type="GO" id="GO:0006808">
    <property type="term" value="P:regulation of nitrogen utilization"/>
    <property type="evidence" value="ECO:0007669"/>
    <property type="project" value="UniProtKB-UniRule"/>
</dbReference>
<dbReference type="CDD" id="cd04899">
    <property type="entry name" value="ACT_ACR-UUR-like_2"/>
    <property type="match status" value="1"/>
</dbReference>
<dbReference type="CDD" id="cd04900">
    <property type="entry name" value="ACT_UUR-like_1"/>
    <property type="match status" value="1"/>
</dbReference>
<dbReference type="CDD" id="cd00077">
    <property type="entry name" value="HDc"/>
    <property type="match status" value="1"/>
</dbReference>
<dbReference type="CDD" id="cd05401">
    <property type="entry name" value="NT_GlnE_GlnD_like"/>
    <property type="match status" value="1"/>
</dbReference>
<dbReference type="FunFam" id="1.10.3210.10:FF:000005">
    <property type="entry name" value="Bifunctional uridylyltransferase/uridylyl-removing enzyme"/>
    <property type="match status" value="1"/>
</dbReference>
<dbReference type="Gene3D" id="1.10.3210.10">
    <property type="entry name" value="Hypothetical protein af1432"/>
    <property type="match status" value="1"/>
</dbReference>
<dbReference type="HAMAP" id="MF_00277">
    <property type="entry name" value="PII_uridylyl_transf"/>
    <property type="match status" value="1"/>
</dbReference>
<dbReference type="InterPro" id="IPR045865">
    <property type="entry name" value="ACT-like_dom_sf"/>
</dbReference>
<dbReference type="InterPro" id="IPR002912">
    <property type="entry name" value="ACT_dom"/>
</dbReference>
<dbReference type="InterPro" id="IPR003607">
    <property type="entry name" value="HD/PDEase_dom"/>
</dbReference>
<dbReference type="InterPro" id="IPR006674">
    <property type="entry name" value="HD_domain"/>
</dbReference>
<dbReference type="InterPro" id="IPR043519">
    <property type="entry name" value="NT_sf"/>
</dbReference>
<dbReference type="InterPro" id="IPR013546">
    <property type="entry name" value="PII_UdlTrfase/GS_AdlTrfase"/>
</dbReference>
<dbReference type="InterPro" id="IPR002934">
    <property type="entry name" value="Polymerase_NTP_transf_dom"/>
</dbReference>
<dbReference type="InterPro" id="IPR010043">
    <property type="entry name" value="UTase/UR"/>
</dbReference>
<dbReference type="NCBIfam" id="NF002487">
    <property type="entry name" value="PRK01759.1"/>
    <property type="match status" value="1"/>
</dbReference>
<dbReference type="NCBIfam" id="NF003448">
    <property type="entry name" value="PRK05007.1"/>
    <property type="match status" value="1"/>
</dbReference>
<dbReference type="NCBIfam" id="TIGR01693">
    <property type="entry name" value="UTase_glnD"/>
    <property type="match status" value="1"/>
</dbReference>
<dbReference type="PANTHER" id="PTHR47320">
    <property type="entry name" value="BIFUNCTIONAL URIDYLYLTRANSFERASE/URIDYLYL-REMOVING ENZYME"/>
    <property type="match status" value="1"/>
</dbReference>
<dbReference type="PANTHER" id="PTHR47320:SF1">
    <property type="entry name" value="BIFUNCTIONAL URIDYLYLTRANSFERASE_URIDYLYL-REMOVING ENZYME"/>
    <property type="match status" value="1"/>
</dbReference>
<dbReference type="Pfam" id="PF01842">
    <property type="entry name" value="ACT"/>
    <property type="match status" value="2"/>
</dbReference>
<dbReference type="Pfam" id="PF08335">
    <property type="entry name" value="GlnD_UR_UTase"/>
    <property type="match status" value="1"/>
</dbReference>
<dbReference type="Pfam" id="PF01966">
    <property type="entry name" value="HD"/>
    <property type="match status" value="1"/>
</dbReference>
<dbReference type="Pfam" id="PF01909">
    <property type="entry name" value="NTP_transf_2"/>
    <property type="match status" value="1"/>
</dbReference>
<dbReference type="PIRSF" id="PIRSF006288">
    <property type="entry name" value="PII_uridyltransf"/>
    <property type="match status" value="1"/>
</dbReference>
<dbReference type="SMART" id="SM00471">
    <property type="entry name" value="HDc"/>
    <property type="match status" value="1"/>
</dbReference>
<dbReference type="SUPFAM" id="SSF55021">
    <property type="entry name" value="ACT-like"/>
    <property type="match status" value="2"/>
</dbReference>
<dbReference type="SUPFAM" id="SSF109604">
    <property type="entry name" value="HD-domain/PDEase-like"/>
    <property type="match status" value="1"/>
</dbReference>
<dbReference type="SUPFAM" id="SSF81301">
    <property type="entry name" value="Nucleotidyltransferase"/>
    <property type="match status" value="1"/>
</dbReference>
<dbReference type="SUPFAM" id="SSF81593">
    <property type="entry name" value="Nucleotidyltransferase substrate binding subunit/domain"/>
    <property type="match status" value="1"/>
</dbReference>
<dbReference type="PROSITE" id="PS51671">
    <property type="entry name" value="ACT"/>
    <property type="match status" value="2"/>
</dbReference>
<dbReference type="PROSITE" id="PS51831">
    <property type="entry name" value="HD"/>
    <property type="match status" value="1"/>
</dbReference>
<name>GLND_ECOL6</name>
<sequence length="890" mass="102378">MNTLPEQYANTALPTLHGQPQNPCAWPRDELTVGGIKAHIDTFQRWLGDAFDNGISAEQLIEARTEFIDQLLQRLWIEAGFSQIADLALVAVGGYGRGELHPLSDIDLLILSRKKLPDDQAQKVGELLTLLWDVKLEVGHSVRTLEECMLEGLSDLTVATNLIESRLLIGDVALFLELQKHIFSEGFWPSDKFYAAKVEEQNQRHQRYHGTSYNLEPDIKSSPGGLRDIHTLQWVARRHFGATSLDEMVGFGFLTSAERAELNECLHILWRIRFALHLVVSRYDNRLLFDRQLSVAQRLNYSGEGNEPVERMMKDYFRVTRRVSELNQMLLQLFDEAILALPADEKPRPIDDEFQLRGTLIDLRDETLFMRQPEAILRMFYTMVRNSAITGIYSTTLRQLRHARRHLQQPLCNIPEARKLFLSILRHPGAVRRGLLPMHRHSVLGAYMPQWSHIVGQMQFDLFHAYTVDEHTIRVMLKLESFASEETRQRHPLCVDVWPRLPSTELIFIAALFHDIAKGRGGDHSILGAQDVVHFAELHGLNSRETQLVAWLVRQHLLMSVTAQRRDIQDPEVIKQFAEEVQTENRLRYLVCLTVADICATNETLWNSWKQSLLRELYFATEKQLRRGMQNTPDMRERVRHHQLQALALLRMDNIDEEALHQIWSRCRANYFVRHSPNQLAWHARHLLQHDLGKPLVLLSPQATRGGTEIFIWSPDRPYLFAAVCAELDRRNLSVHDAQIFTTRDGMAMDTFIVLEPDGSPLSADRHEVIRFGLEQVLTQSSWQPPQPRRQPAKLRHFTVETEVTFLPTHTDRKSFLELIALDQPGLLARVGKIFADLGISLHGARITTIGERVEDLFIIATADRRALNNELQQEVHQRLTEALNPNDKG</sequence>
<organism>
    <name type="scientific">Escherichia coli O6:H1 (strain CFT073 / ATCC 700928 / UPEC)</name>
    <dbReference type="NCBI Taxonomy" id="199310"/>
    <lineage>
        <taxon>Bacteria</taxon>
        <taxon>Pseudomonadati</taxon>
        <taxon>Pseudomonadota</taxon>
        <taxon>Gammaproteobacteria</taxon>
        <taxon>Enterobacterales</taxon>
        <taxon>Enterobacteriaceae</taxon>
        <taxon>Escherichia</taxon>
    </lineage>
</organism>
<proteinExistence type="inferred from homology"/>
<reference key="1">
    <citation type="journal article" date="2002" name="Proc. Natl. Acad. Sci. U.S.A.">
        <title>Extensive mosaic structure revealed by the complete genome sequence of uropathogenic Escherichia coli.</title>
        <authorList>
            <person name="Welch R.A."/>
            <person name="Burland V."/>
            <person name="Plunkett G. III"/>
            <person name="Redford P."/>
            <person name="Roesch P."/>
            <person name="Rasko D."/>
            <person name="Buckles E.L."/>
            <person name="Liou S.-R."/>
            <person name="Boutin A."/>
            <person name="Hackett J."/>
            <person name="Stroud D."/>
            <person name="Mayhew G.F."/>
            <person name="Rose D.J."/>
            <person name="Zhou S."/>
            <person name="Schwartz D.C."/>
            <person name="Perna N.T."/>
            <person name="Mobley H.L.T."/>
            <person name="Donnenberg M.S."/>
            <person name="Blattner F.R."/>
        </authorList>
    </citation>
    <scope>NUCLEOTIDE SEQUENCE [LARGE SCALE GENOMIC DNA]</scope>
    <source>
        <strain>CFT073 / ATCC 700928 / UPEC</strain>
    </source>
</reference>
<comment type="function">
    <text evidence="1">Modifies, by uridylylation and deuridylylation, the PII regulatory proteins (GlnB and homologs), in response to the nitrogen status of the cell that GlnD senses through the glutamine level. Under low glutamine levels, catalyzes the conversion of the PII proteins and UTP to PII-UMP and PPi, while under higher glutamine levels, GlnD hydrolyzes PII-UMP to PII and UMP (deuridylylation). Thus, controls uridylylation state and activity of the PII proteins, and plays an important role in the regulation of nitrogen assimilation and metabolism.</text>
</comment>
<comment type="catalytic activity">
    <reaction evidence="1">
        <text>[protein-PII]-L-tyrosine + UTP = [protein-PII]-uridylyl-L-tyrosine + diphosphate</text>
        <dbReference type="Rhea" id="RHEA:13673"/>
        <dbReference type="Rhea" id="RHEA-COMP:12147"/>
        <dbReference type="Rhea" id="RHEA-COMP:12148"/>
        <dbReference type="ChEBI" id="CHEBI:33019"/>
        <dbReference type="ChEBI" id="CHEBI:46398"/>
        <dbReference type="ChEBI" id="CHEBI:46858"/>
        <dbReference type="ChEBI" id="CHEBI:90602"/>
        <dbReference type="EC" id="2.7.7.59"/>
    </reaction>
</comment>
<comment type="catalytic activity">
    <reaction evidence="1">
        <text>[protein-PII]-uridylyl-L-tyrosine + H2O = [protein-PII]-L-tyrosine + UMP + H(+)</text>
        <dbReference type="Rhea" id="RHEA:48600"/>
        <dbReference type="Rhea" id="RHEA-COMP:12147"/>
        <dbReference type="Rhea" id="RHEA-COMP:12148"/>
        <dbReference type="ChEBI" id="CHEBI:15377"/>
        <dbReference type="ChEBI" id="CHEBI:15378"/>
        <dbReference type="ChEBI" id="CHEBI:46858"/>
        <dbReference type="ChEBI" id="CHEBI:57865"/>
        <dbReference type="ChEBI" id="CHEBI:90602"/>
    </reaction>
</comment>
<comment type="cofactor">
    <cofactor evidence="1">
        <name>Mg(2+)</name>
        <dbReference type="ChEBI" id="CHEBI:18420"/>
    </cofactor>
</comment>
<comment type="activity regulation">
    <text evidence="1">Uridylyltransferase (UTase) activity is inhibited by glutamine, while glutamine activates uridylyl-removing (UR) activity.</text>
</comment>
<comment type="domain">
    <text evidence="1">Has four distinct domains: an N-terminal nucleotidyltransferase (NT) domain responsible for UTase activity, a central HD domain that encodes UR activity, and two C-terminal ACT domains that seem to have a role in glutamine sensing.</text>
</comment>
<comment type="similarity">
    <text evidence="1">Belongs to the GlnD family.</text>
</comment>
<keyword id="KW-0378">Hydrolase</keyword>
<keyword id="KW-0460">Magnesium</keyword>
<keyword id="KW-0511">Multifunctional enzyme</keyword>
<keyword id="KW-0548">Nucleotidyltransferase</keyword>
<keyword id="KW-1185">Reference proteome</keyword>
<keyword id="KW-0677">Repeat</keyword>
<keyword id="KW-0808">Transferase</keyword>
<feature type="chain" id="PRO_0000192734" description="Bifunctional uridylyltransferase/uridylyl-removing enzyme">
    <location>
        <begin position="1"/>
        <end position="890"/>
    </location>
</feature>
<feature type="domain" description="HD" evidence="2">
    <location>
        <begin position="468"/>
        <end position="590"/>
    </location>
</feature>
<feature type="domain" description="ACT 1" evidence="1">
    <location>
        <begin position="709"/>
        <end position="789"/>
    </location>
</feature>
<feature type="domain" description="ACT 2" evidence="1">
    <location>
        <begin position="816"/>
        <end position="890"/>
    </location>
</feature>
<feature type="region of interest" description="Uridylyltransferase">
    <location>
        <begin position="1"/>
        <end position="349"/>
    </location>
</feature>
<feature type="region of interest" description="Uridylyl-removing">
    <location>
        <begin position="350"/>
        <end position="708"/>
    </location>
</feature>
<evidence type="ECO:0000255" key="1">
    <source>
        <dbReference type="HAMAP-Rule" id="MF_00277"/>
    </source>
</evidence>
<evidence type="ECO:0000255" key="2">
    <source>
        <dbReference type="PROSITE-ProRule" id="PRU01175"/>
    </source>
</evidence>
<accession>Q8CY19</accession>
<gene>
    <name evidence="1" type="primary">glnD</name>
    <name type="ordered locus">c0202</name>
</gene>